<evidence type="ECO:0000255" key="1">
    <source>
        <dbReference type="PROSITE-ProRule" id="PRU00296"/>
    </source>
</evidence>
<evidence type="ECO:0000305" key="2"/>
<name>Y142_AERPE</name>
<feature type="chain" id="PRO_0000201123" description="Uncharacterized HTH-type transcriptional regulator APE_0142">
    <location>
        <begin position="1"/>
        <end position="180"/>
    </location>
</feature>
<feature type="domain" description="HTH dtxR-type" evidence="1">
    <location>
        <begin position="17"/>
        <end position="80"/>
    </location>
</feature>
<proteinExistence type="inferred from homology"/>
<gene>
    <name type="ordered locus">APE_0142</name>
</gene>
<reference key="1">
    <citation type="journal article" date="1999" name="DNA Res.">
        <title>Complete genome sequence of an aerobic hyper-thermophilic crenarchaeon, Aeropyrum pernix K1.</title>
        <authorList>
            <person name="Kawarabayasi Y."/>
            <person name="Hino Y."/>
            <person name="Horikawa H."/>
            <person name="Yamazaki S."/>
            <person name="Haikawa Y."/>
            <person name="Jin-no K."/>
            <person name="Takahashi M."/>
            <person name="Sekine M."/>
            <person name="Baba S."/>
            <person name="Ankai A."/>
            <person name="Kosugi H."/>
            <person name="Hosoyama A."/>
            <person name="Fukui S."/>
            <person name="Nagai Y."/>
            <person name="Nishijima K."/>
            <person name="Nakazawa H."/>
            <person name="Takamiya M."/>
            <person name="Masuda S."/>
            <person name="Funahashi T."/>
            <person name="Tanaka T."/>
            <person name="Kudoh Y."/>
            <person name="Yamazaki J."/>
            <person name="Kushida N."/>
            <person name="Oguchi A."/>
            <person name="Aoki K."/>
            <person name="Kubota K."/>
            <person name="Nakamura Y."/>
            <person name="Nomura N."/>
            <person name="Sako Y."/>
            <person name="Kikuchi H."/>
        </authorList>
    </citation>
    <scope>NUCLEOTIDE SEQUENCE [LARGE SCALE GENOMIC DNA]</scope>
    <source>
        <strain>ATCC 700893 / DSM 11879 / JCM 9820 / NBRC 100138 / K1</strain>
    </source>
</reference>
<keyword id="KW-0238">DNA-binding</keyword>
<keyword id="KW-1185">Reference proteome</keyword>
<keyword id="KW-0804">Transcription</keyword>
<keyword id="KW-0805">Transcription regulation</keyword>
<dbReference type="EMBL" id="BA000002">
    <property type="protein sequence ID" value="BAA79053.1"/>
    <property type="molecule type" value="Genomic_DNA"/>
</dbReference>
<dbReference type="PIR" id="C72769">
    <property type="entry name" value="C72769"/>
</dbReference>
<dbReference type="RefSeq" id="WP_010865520.1">
    <property type="nucleotide sequence ID" value="NC_000854.2"/>
</dbReference>
<dbReference type="SMR" id="Q9YFV8"/>
<dbReference type="STRING" id="272557.APE_0142"/>
<dbReference type="EnsemblBacteria" id="BAA79053">
    <property type="protein sequence ID" value="BAA79053"/>
    <property type="gene ID" value="APE_0142"/>
</dbReference>
<dbReference type="GeneID" id="1445677"/>
<dbReference type="KEGG" id="ape:APE_0142"/>
<dbReference type="eggNOG" id="arCOG02100">
    <property type="taxonomic scope" value="Archaea"/>
</dbReference>
<dbReference type="Proteomes" id="UP000002518">
    <property type="component" value="Chromosome"/>
</dbReference>
<dbReference type="GO" id="GO:0003677">
    <property type="term" value="F:DNA binding"/>
    <property type="evidence" value="ECO:0007669"/>
    <property type="project" value="UniProtKB-KW"/>
</dbReference>
<dbReference type="GO" id="GO:0003700">
    <property type="term" value="F:DNA-binding transcription factor activity"/>
    <property type="evidence" value="ECO:0007669"/>
    <property type="project" value="InterPro"/>
</dbReference>
<dbReference type="GO" id="GO:0046983">
    <property type="term" value="F:protein dimerization activity"/>
    <property type="evidence" value="ECO:0007669"/>
    <property type="project" value="InterPro"/>
</dbReference>
<dbReference type="GO" id="GO:0046914">
    <property type="term" value="F:transition metal ion binding"/>
    <property type="evidence" value="ECO:0007669"/>
    <property type="project" value="InterPro"/>
</dbReference>
<dbReference type="Gene3D" id="1.10.10.10">
    <property type="entry name" value="Winged helix-like DNA-binding domain superfamily/Winged helix DNA-binding domain"/>
    <property type="match status" value="1"/>
</dbReference>
<dbReference type="InterPro" id="IPR050536">
    <property type="entry name" value="DtxR_MntR_Metal-Reg"/>
</dbReference>
<dbReference type="InterPro" id="IPR001367">
    <property type="entry name" value="Fe_dep_repressor"/>
</dbReference>
<dbReference type="InterPro" id="IPR036421">
    <property type="entry name" value="Fe_dep_repressor_sf"/>
</dbReference>
<dbReference type="InterPro" id="IPR022687">
    <property type="entry name" value="HTH_DTXR"/>
</dbReference>
<dbReference type="InterPro" id="IPR022689">
    <property type="entry name" value="Iron_dep_repressor"/>
</dbReference>
<dbReference type="InterPro" id="IPR036388">
    <property type="entry name" value="WH-like_DNA-bd_sf"/>
</dbReference>
<dbReference type="InterPro" id="IPR036390">
    <property type="entry name" value="WH_DNA-bd_sf"/>
</dbReference>
<dbReference type="PANTHER" id="PTHR33238">
    <property type="entry name" value="IRON (METAL) DEPENDENT REPRESSOR, DTXR FAMILY"/>
    <property type="match status" value="1"/>
</dbReference>
<dbReference type="PANTHER" id="PTHR33238:SF7">
    <property type="entry name" value="IRON-DEPENDENT TRANSCRIPTIONAL REGULATOR"/>
    <property type="match status" value="1"/>
</dbReference>
<dbReference type="Pfam" id="PF02742">
    <property type="entry name" value="Fe_dep_repr_C"/>
    <property type="match status" value="1"/>
</dbReference>
<dbReference type="Pfam" id="PF01325">
    <property type="entry name" value="Fe_dep_repress"/>
    <property type="match status" value="1"/>
</dbReference>
<dbReference type="SMART" id="SM00529">
    <property type="entry name" value="HTH_DTXR"/>
    <property type="match status" value="1"/>
</dbReference>
<dbReference type="SUPFAM" id="SSF47979">
    <property type="entry name" value="Iron-dependent repressor protein, dimerization domain"/>
    <property type="match status" value="1"/>
</dbReference>
<dbReference type="SUPFAM" id="SSF46785">
    <property type="entry name" value="Winged helix' DNA-binding domain"/>
    <property type="match status" value="1"/>
</dbReference>
<dbReference type="PROSITE" id="PS50944">
    <property type="entry name" value="HTH_DTXR"/>
    <property type="match status" value="1"/>
</dbReference>
<sequence>MSRGRADTAGDCSKNGRRSRILHYLMAIYLLNGLPGGEYARFIKIARLLDVSPSTVSIMTRRLQMKGLVELIPNMGVRLTEQGLKILSNYLWKSAILEVLLARAGVDIDNCRGMGLRMAEGLSDEDAWILYKVLGEPKYCPHKKPIIPPDEINAENARQIALCCGISILQIPNNRLQPPS</sequence>
<comment type="similarity">
    <text evidence="2">Belongs to the DtxR/MntR family.</text>
</comment>
<accession>Q9YFV8</accession>
<protein>
    <recommendedName>
        <fullName>Uncharacterized HTH-type transcriptional regulator APE_0142</fullName>
    </recommendedName>
</protein>
<organism>
    <name type="scientific">Aeropyrum pernix (strain ATCC 700893 / DSM 11879 / JCM 9820 / NBRC 100138 / K1)</name>
    <dbReference type="NCBI Taxonomy" id="272557"/>
    <lineage>
        <taxon>Archaea</taxon>
        <taxon>Thermoproteota</taxon>
        <taxon>Thermoprotei</taxon>
        <taxon>Desulfurococcales</taxon>
        <taxon>Desulfurococcaceae</taxon>
        <taxon>Aeropyrum</taxon>
    </lineage>
</organism>